<accession>A0A805Z5R7</accession>
<name>CBH_LACGA</name>
<proteinExistence type="evidence at protein level"/>
<organism>
    <name type="scientific">Lactobacillus gasseri (strain ATCC 33323 / DSM 20243 / BCRC 14619 / CIP 102991 / JCM 1131 / KCTC 3163 / NCIMB 11718 / NCTC 13722 / AM63)</name>
    <dbReference type="NCBI Taxonomy" id="324831"/>
    <lineage>
        <taxon>Bacteria</taxon>
        <taxon>Bacillati</taxon>
        <taxon>Bacillota</taxon>
        <taxon>Bacilli</taxon>
        <taxon>Lactobacillales</taxon>
        <taxon>Lactobacillaceae</taxon>
        <taxon>Lactobacillus</taxon>
    </lineage>
</organism>
<evidence type="ECO:0000250" key="1">
    <source>
        <dbReference type="UniProtKB" id="P54965"/>
    </source>
</evidence>
<evidence type="ECO:0000269" key="2">
    <source>
    </source>
</evidence>
<evidence type="ECO:0000303" key="3">
    <source>
    </source>
</evidence>
<evidence type="ECO:0000305" key="4"/>
<evidence type="ECO:0000305" key="5">
    <source>
    </source>
</evidence>
<evidence type="ECO:0000312" key="6">
    <source>
        <dbReference type="EMBL" id="ABJ59469.1"/>
    </source>
</evidence>
<evidence type="ECO:0007829" key="7">
    <source>
        <dbReference type="PDB" id="7SVG"/>
    </source>
</evidence>
<gene>
    <name evidence="3" type="primary">bsh</name>
    <name evidence="6" type="ordered locus">LGAS_0054</name>
</gene>
<reference key="1">
    <citation type="journal article" date="2006" name="Proc. Natl. Acad. Sci. U.S.A.">
        <title>Comparative genomics of the lactic acid bacteria.</title>
        <authorList>
            <person name="Makarova K.S."/>
            <person name="Slesarev A."/>
            <person name="Wolf Y.I."/>
            <person name="Sorokin A."/>
            <person name="Mirkin B."/>
            <person name="Koonin E.V."/>
            <person name="Pavlov A."/>
            <person name="Pavlova N."/>
            <person name="Karamychev V."/>
            <person name="Polouchine N."/>
            <person name="Shakhova V."/>
            <person name="Grigoriev I."/>
            <person name="Lou Y."/>
            <person name="Rohksar D."/>
            <person name="Lucas S."/>
            <person name="Huang K."/>
            <person name="Goodstein D.M."/>
            <person name="Hawkins T."/>
            <person name="Plengvidhya V."/>
            <person name="Welker D."/>
            <person name="Hughes J."/>
            <person name="Goh Y."/>
            <person name="Benson A."/>
            <person name="Baldwin K."/>
            <person name="Lee J.-H."/>
            <person name="Diaz-Muniz I."/>
            <person name="Dosti B."/>
            <person name="Smeianov V."/>
            <person name="Wechter W."/>
            <person name="Barabote R."/>
            <person name="Lorca G."/>
            <person name="Altermann E."/>
            <person name="Barrangou R."/>
            <person name="Ganesan B."/>
            <person name="Xie Y."/>
            <person name="Rawsthorne H."/>
            <person name="Tamir D."/>
            <person name="Parker C."/>
            <person name="Breidt F."/>
            <person name="Broadbent J.R."/>
            <person name="Hutkins R."/>
            <person name="O'Sullivan D."/>
            <person name="Steele J."/>
            <person name="Unlu G."/>
            <person name="Saier M.H. Jr."/>
            <person name="Klaenhammer T."/>
            <person name="Richardson P."/>
            <person name="Kozyavkin S."/>
            <person name="Weimer B.C."/>
            <person name="Mills D.A."/>
        </authorList>
    </citation>
    <scope>NUCLEOTIDE SEQUENCE [LARGE SCALE GENOMIC DNA]</scope>
    <source>
        <strain>ATCC 33323 / DSM 20243 / BCRC 14619 / CIP 102991 / JCM 1131 / KCTC 3163 / NCIMB 11718 / NCTC 13722 / AM63</strain>
    </source>
</reference>
<reference key="2">
    <citation type="journal article" date="2021" name="Microorganisms">
        <title>Identification of Bile Salt Hydrolase and Bile Salt Resistance in a Probiotic Bacterium Lactobacillus gasseri JCM1131T.</title>
        <authorList>
            <person name="Kusada H."/>
            <person name="Morinaga K."/>
            <person name="Tamaki H."/>
        </authorList>
    </citation>
    <scope>FUNCTION</scope>
    <scope>CATALYTIC ACTIVITY</scope>
    <scope>BIOPHYSICOCHEMICAL PROPERTIES</scope>
    <scope>INDUCTION</scope>
    <source>
        <strain>ATCC 33323 / DSM 20243 / BCRC 14619 / CIP 102991 / JCM 1131 / KCTC 3163 / NCIMB 11718 / NCTC 13722 / AM63</strain>
    </source>
</reference>
<sequence length="316" mass="35000">MCTGLRFTDDQGNLYFGRNLDVGQDYGEGVIITPRNYPLPYKFLDNTTTKKAVIGMGIVVDGYPSYFDCFNEDGLGIAGLNFPHFAKFSDGPIDGKINLASYEIMLWVTQNFTKVSDVKEALKNVNLVNEAINSSFAVAPLHWIISDKDEAIIVEVSKQYGMKVFDDKLGVLTNSPDFNWHLTNLGNYTGLDPHDATAQSWNGQKVAPWGVGTGSLGLPGDSIPADRFVKAAYLNVNYPTVKGEKANVAKFFNILKSVAMIKGSVVNKLGSDEYTVYTACYSAATKTYYCNFENDFELKTYKLDDETMNADKLITY</sequence>
<keyword id="KW-0002">3D-structure</keyword>
<keyword id="KW-0378">Hydrolase</keyword>
<keyword id="KW-0443">Lipid metabolism</keyword>
<feature type="chain" id="PRO_0000460259" description="Conjugated bile acid hydrolase">
    <location>
        <begin position="1"/>
        <end position="316"/>
    </location>
</feature>
<feature type="active site" description="Nucleophile" evidence="1">
    <location>
        <position position="2"/>
    </location>
</feature>
<feature type="binding site" evidence="1">
    <location>
        <position position="2"/>
    </location>
    <ligand>
        <name>deoxycholate</name>
        <dbReference type="ChEBI" id="CHEBI:23614"/>
    </ligand>
</feature>
<feature type="binding site" evidence="1">
    <location>
        <position position="18"/>
    </location>
    <ligand>
        <name>deoxycholate</name>
        <dbReference type="ChEBI" id="CHEBI:23614"/>
    </ligand>
</feature>
<feature type="binding site" evidence="1">
    <location>
        <position position="81"/>
    </location>
    <ligand>
        <name>taurine</name>
        <dbReference type="ChEBI" id="CHEBI:507393"/>
    </ligand>
</feature>
<feature type="strand" evidence="7">
    <location>
        <begin position="3"/>
        <end position="8"/>
    </location>
</feature>
<feature type="strand" evidence="7">
    <location>
        <begin position="14"/>
        <end position="24"/>
    </location>
</feature>
<feature type="strand" evidence="7">
    <location>
        <begin position="29"/>
        <end position="33"/>
    </location>
</feature>
<feature type="strand" evidence="7">
    <location>
        <begin position="42"/>
        <end position="44"/>
    </location>
</feature>
<feature type="strand" evidence="7">
    <location>
        <begin position="53"/>
        <end position="60"/>
    </location>
</feature>
<feature type="strand" evidence="7">
    <location>
        <begin position="63"/>
        <end position="71"/>
    </location>
</feature>
<feature type="strand" evidence="7">
    <location>
        <begin position="76"/>
        <end position="81"/>
    </location>
</feature>
<feature type="turn" evidence="7">
    <location>
        <begin position="83"/>
        <end position="85"/>
    </location>
</feature>
<feature type="strand" evidence="7">
    <location>
        <begin position="89"/>
        <end position="91"/>
    </location>
</feature>
<feature type="strand" evidence="7">
    <location>
        <begin position="96"/>
        <end position="100"/>
    </location>
</feature>
<feature type="helix" evidence="7">
    <location>
        <begin position="101"/>
        <end position="103"/>
    </location>
</feature>
<feature type="helix" evidence="7">
    <location>
        <begin position="104"/>
        <end position="111"/>
    </location>
</feature>
<feature type="helix" evidence="7">
    <location>
        <begin position="115"/>
        <end position="122"/>
    </location>
</feature>
<feature type="strand" evidence="7">
    <location>
        <begin position="125"/>
        <end position="129"/>
    </location>
</feature>
<feature type="strand" evidence="7">
    <location>
        <begin position="141"/>
        <end position="146"/>
    </location>
</feature>
<feature type="strand" evidence="7">
    <location>
        <begin position="151"/>
        <end position="157"/>
    </location>
</feature>
<feature type="turn" evidence="7">
    <location>
        <begin position="158"/>
        <end position="160"/>
    </location>
</feature>
<feature type="strand" evidence="7">
    <location>
        <begin position="161"/>
        <end position="166"/>
    </location>
</feature>
<feature type="strand" evidence="7">
    <location>
        <begin position="174"/>
        <end position="176"/>
    </location>
</feature>
<feature type="helix" evidence="7">
    <location>
        <begin position="178"/>
        <end position="185"/>
    </location>
</feature>
<feature type="helix" evidence="7">
    <location>
        <begin position="186"/>
        <end position="188"/>
    </location>
</feature>
<feature type="strand" evidence="7">
    <location>
        <begin position="199"/>
        <end position="201"/>
    </location>
</feature>
<feature type="strand" evidence="7">
    <location>
        <begin position="204"/>
        <end position="206"/>
    </location>
</feature>
<feature type="strand" evidence="7">
    <location>
        <begin position="209"/>
        <end position="211"/>
    </location>
</feature>
<feature type="helix" evidence="7">
    <location>
        <begin position="213"/>
        <end position="215"/>
    </location>
</feature>
<feature type="helix" evidence="7">
    <location>
        <begin position="224"/>
        <end position="237"/>
    </location>
</feature>
<feature type="helix" evidence="7">
    <location>
        <begin position="244"/>
        <end position="257"/>
    </location>
</feature>
<feature type="strand" evidence="7">
    <location>
        <begin position="274"/>
        <end position="282"/>
    </location>
</feature>
<feature type="turn" evidence="7">
    <location>
        <begin position="283"/>
        <end position="286"/>
    </location>
</feature>
<feature type="strand" evidence="7">
    <location>
        <begin position="287"/>
        <end position="292"/>
    </location>
</feature>
<feature type="strand" evidence="7">
    <location>
        <begin position="295"/>
        <end position="302"/>
    </location>
</feature>
<feature type="helix" evidence="7">
    <location>
        <begin position="307"/>
        <end position="309"/>
    </location>
</feature>
<feature type="strand" evidence="7">
    <location>
        <begin position="314"/>
        <end position="316"/>
    </location>
</feature>
<comment type="function">
    <text evidence="2">Bile salt hydrolase that catalyzes the deconjugation of glycine- and taurine-linked bile salts, which occurs naturally in the intestines of humans, releasing amino acid residues and deconjugated bile salts (bile acids) (PubMed:34066735). Can hydrolyze the amide bond in the bile salts taurocholate (TCA), taurodeoxycholate (TDCA), taurochenodeoxycholate (TCDCA), glycocholate (GCA) and glycodeoxycholate (GDCA) (PubMed:34066735). Shows highest activity toward the taurine-conjugated bile salts TCA and TCDCA (PubMed:34066735). The activity toward the other three substrates (TDCA, GCA and GDCA) is relatively low (PubMed:34066735). This enzyme likely contributes to bile salt resistance of the strain and may be associated with survival capability of strain JCM1131 within the human intestine by bile detoxification (PubMed:34066735).</text>
</comment>
<comment type="catalytic activity">
    <reaction evidence="2">
        <text>cholate + taurine = taurocholate + H2O</text>
        <dbReference type="Rhea" id="RHEA:47108"/>
        <dbReference type="ChEBI" id="CHEBI:15377"/>
        <dbReference type="ChEBI" id="CHEBI:29747"/>
        <dbReference type="ChEBI" id="CHEBI:36257"/>
        <dbReference type="ChEBI" id="CHEBI:507393"/>
    </reaction>
    <physiologicalReaction direction="right-to-left" evidence="5">
        <dbReference type="Rhea" id="RHEA:47110"/>
    </physiologicalReaction>
</comment>
<comment type="catalytic activity">
    <reaction evidence="2">
        <text>taurochenodeoxycholate + H2O = chenodeoxycholate + taurine</text>
        <dbReference type="Rhea" id="RHEA:16309"/>
        <dbReference type="ChEBI" id="CHEBI:9407"/>
        <dbReference type="ChEBI" id="CHEBI:15377"/>
        <dbReference type="ChEBI" id="CHEBI:36234"/>
        <dbReference type="ChEBI" id="CHEBI:507393"/>
        <dbReference type="EC" id="3.5.1.74"/>
    </reaction>
    <physiologicalReaction direction="left-to-right" evidence="5">
        <dbReference type="Rhea" id="RHEA:16310"/>
    </physiologicalReaction>
</comment>
<comment type="catalytic activity">
    <reaction evidence="2">
        <text>taurodeoxycholate + H2O = deoxycholate + taurine</text>
        <dbReference type="Rhea" id="RHEA:47556"/>
        <dbReference type="ChEBI" id="CHEBI:15377"/>
        <dbReference type="ChEBI" id="CHEBI:23614"/>
        <dbReference type="ChEBI" id="CHEBI:36261"/>
        <dbReference type="ChEBI" id="CHEBI:507393"/>
    </reaction>
    <physiologicalReaction direction="left-to-right" evidence="5">
        <dbReference type="Rhea" id="RHEA:47557"/>
    </physiologicalReaction>
</comment>
<comment type="catalytic activity">
    <reaction evidence="2">
        <text>glycocholate + H2O = cholate + glycine</text>
        <dbReference type="Rhea" id="RHEA:19353"/>
        <dbReference type="ChEBI" id="CHEBI:15377"/>
        <dbReference type="ChEBI" id="CHEBI:29746"/>
        <dbReference type="ChEBI" id="CHEBI:29747"/>
        <dbReference type="ChEBI" id="CHEBI:57305"/>
        <dbReference type="EC" id="3.5.1.24"/>
    </reaction>
    <physiologicalReaction direction="left-to-right" evidence="5">
        <dbReference type="Rhea" id="RHEA:19354"/>
    </physiologicalReaction>
</comment>
<comment type="catalytic activity">
    <reaction evidence="2">
        <text>glycodeoxycholate + H2O = deoxycholate + glycine</text>
        <dbReference type="Rhea" id="RHEA:47552"/>
        <dbReference type="ChEBI" id="CHEBI:15377"/>
        <dbReference type="ChEBI" id="CHEBI:23614"/>
        <dbReference type="ChEBI" id="CHEBI:57305"/>
        <dbReference type="ChEBI" id="CHEBI:82982"/>
    </reaction>
    <physiologicalReaction direction="left-to-right" evidence="5">
        <dbReference type="Rhea" id="RHEA:47553"/>
    </physiologicalReaction>
</comment>
<comment type="biophysicochemical properties">
    <phDependence>
        <text evidence="2">Optimum pH is 6.0 (PubMed:34066735). Exhibits stable activity and retains approximately above 80% of its original activity at broad pH range (pH 3.0-8.0) (PubMed:34066735).</text>
    </phDependence>
    <temperatureDependence>
        <text evidence="2">Optimum temperature is 37 degrees Celsius (PubMed:34066735). Exhibits high activity in wide temperature range (10-50 degrees Celsius) (PubMed:34066735).</text>
    </temperatureDependence>
</comment>
<comment type="pathway">
    <text evidence="5">Lipid metabolism; bile acid biosynthesis.</text>
</comment>
<comment type="induction">
    <text evidence="2">Constitutively expressed (PubMed:34066735). Exposure to TCA and TDCA has little effect on the gene transcription (PubMed:34066735).</text>
</comment>
<comment type="similarity">
    <text evidence="4">Belongs to the peptidase C59 family.</text>
</comment>
<protein>
    <recommendedName>
        <fullName evidence="4">Conjugated bile acid hydrolase</fullName>
        <ecNumber evidence="2">3.5.1.-</ecNumber>
    </recommendedName>
    <alternativeName>
        <fullName evidence="3">Bile salt hydrolase</fullName>
        <shortName evidence="3">BSH</shortName>
    </alternativeName>
    <alternativeName>
        <fullName evidence="4">Chenodeoxycholoyltaurine hydrolase</fullName>
        <ecNumber evidence="2">3.5.1.74</ecNumber>
    </alternativeName>
    <alternativeName>
        <fullName evidence="4">Choloylglycine hydrolase</fullName>
        <ecNumber evidence="2">3.5.1.24</ecNumber>
    </alternativeName>
    <alternativeName>
        <fullName evidence="3">LagBSH</fullName>
    </alternativeName>
</protein>
<dbReference type="EC" id="3.5.1.-" evidence="2"/>
<dbReference type="EC" id="3.5.1.74" evidence="2"/>
<dbReference type="EC" id="3.5.1.24" evidence="2"/>
<dbReference type="EMBL" id="CP000413">
    <property type="protein sequence ID" value="ABJ59469.1"/>
    <property type="molecule type" value="Genomic_DNA"/>
</dbReference>
<dbReference type="RefSeq" id="WP_003648098.1">
    <property type="nucleotide sequence ID" value="NZ_WBMG01000011.1"/>
</dbReference>
<dbReference type="PDB" id="7SVF">
    <property type="method" value="X-ray"/>
    <property type="resolution" value="2.05 A"/>
    <property type="chains" value="A/B/C/D=1-316"/>
</dbReference>
<dbReference type="PDB" id="7SVG">
    <property type="method" value="X-ray"/>
    <property type="resolution" value="1.35 A"/>
    <property type="chains" value="A/B/C/D=1-316"/>
</dbReference>
<dbReference type="PDB" id="8ETK">
    <property type="method" value="X-ray"/>
    <property type="resolution" value="1.83 A"/>
    <property type="chains" value="A/B=1-316"/>
</dbReference>
<dbReference type="PDB" id="8EWT">
    <property type="method" value="X-ray"/>
    <property type="resolution" value="2.03 A"/>
    <property type="chains" value="A/B=1-316"/>
</dbReference>
<dbReference type="PDBsum" id="7SVF"/>
<dbReference type="PDBsum" id="7SVG"/>
<dbReference type="PDBsum" id="8ETK"/>
<dbReference type="PDBsum" id="8EWT"/>
<dbReference type="SMR" id="A0A805Z5R7"/>
<dbReference type="GeneID" id="29638484"/>
<dbReference type="KEGG" id="lga:LGAS_0054"/>
<dbReference type="UniPathway" id="UPA00221"/>
<dbReference type="Proteomes" id="UP000000664">
    <property type="component" value="Chromosome"/>
</dbReference>
<dbReference type="GO" id="GO:0016787">
    <property type="term" value="F:hydrolase activity"/>
    <property type="evidence" value="ECO:0007669"/>
    <property type="project" value="UniProtKB-KW"/>
</dbReference>
<dbReference type="GO" id="GO:0006629">
    <property type="term" value="P:lipid metabolic process"/>
    <property type="evidence" value="ECO:0007669"/>
    <property type="project" value="UniProtKB-KW"/>
</dbReference>
<dbReference type="CDD" id="cd00542">
    <property type="entry name" value="Ntn_PVA"/>
    <property type="match status" value="1"/>
</dbReference>
<dbReference type="Gene3D" id="3.60.60.10">
    <property type="entry name" value="Penicillin V Acylase, Chain A"/>
    <property type="match status" value="1"/>
</dbReference>
<dbReference type="InterPro" id="IPR047711">
    <property type="entry name" value="CBAH"/>
</dbReference>
<dbReference type="InterPro" id="IPR029132">
    <property type="entry name" value="CBAH/NAAA_C"/>
</dbReference>
<dbReference type="InterPro" id="IPR029055">
    <property type="entry name" value="Ntn_hydrolases_N"/>
</dbReference>
<dbReference type="InterPro" id="IPR052193">
    <property type="entry name" value="Peptidase_C59"/>
</dbReference>
<dbReference type="NCBIfam" id="NF038245">
    <property type="entry name" value="bile_salt_hydro"/>
    <property type="match status" value="1"/>
</dbReference>
<dbReference type="PANTHER" id="PTHR35527">
    <property type="entry name" value="CHOLOYLGLYCINE HYDROLASE"/>
    <property type="match status" value="1"/>
</dbReference>
<dbReference type="PANTHER" id="PTHR35527:SF2">
    <property type="entry name" value="HYDROLASE"/>
    <property type="match status" value="1"/>
</dbReference>
<dbReference type="Pfam" id="PF02275">
    <property type="entry name" value="CBAH"/>
    <property type="match status" value="1"/>
</dbReference>
<dbReference type="SUPFAM" id="SSF56235">
    <property type="entry name" value="N-terminal nucleophile aminohydrolases (Ntn hydrolases)"/>
    <property type="match status" value="1"/>
</dbReference>